<accession>Q2LQ68</accession>
<name>RIMO_SYNAS</name>
<gene>
    <name evidence="1" type="primary">rimO</name>
    <name type="ordered locus">SYNAS_02700</name>
    <name type="ORF">SYN_01273</name>
</gene>
<organism>
    <name type="scientific">Syntrophus aciditrophicus (strain SB)</name>
    <dbReference type="NCBI Taxonomy" id="56780"/>
    <lineage>
        <taxon>Bacteria</taxon>
        <taxon>Pseudomonadati</taxon>
        <taxon>Thermodesulfobacteriota</taxon>
        <taxon>Syntrophia</taxon>
        <taxon>Syntrophales</taxon>
        <taxon>Syntrophaceae</taxon>
        <taxon>Syntrophus</taxon>
    </lineage>
</organism>
<reference key="1">
    <citation type="journal article" date="2007" name="Proc. Natl. Acad. Sci. U.S.A.">
        <title>The genome of Syntrophus aciditrophicus: life at the thermodynamic limit of microbial growth.</title>
        <authorList>
            <person name="McInerney M.J."/>
            <person name="Rohlin L."/>
            <person name="Mouttaki H."/>
            <person name="Kim U."/>
            <person name="Krupp R.S."/>
            <person name="Rios-Hernandez L."/>
            <person name="Sieber J."/>
            <person name="Struchtemeyer C.G."/>
            <person name="Bhattacharyya A."/>
            <person name="Campbell J.W."/>
            <person name="Gunsalus R.P."/>
        </authorList>
    </citation>
    <scope>NUCLEOTIDE SEQUENCE [LARGE SCALE GENOMIC DNA]</scope>
    <source>
        <strain>SB</strain>
    </source>
</reference>
<keyword id="KW-0004">4Fe-4S</keyword>
<keyword id="KW-0963">Cytoplasm</keyword>
<keyword id="KW-0408">Iron</keyword>
<keyword id="KW-0411">Iron-sulfur</keyword>
<keyword id="KW-0479">Metal-binding</keyword>
<keyword id="KW-1185">Reference proteome</keyword>
<keyword id="KW-0949">S-adenosyl-L-methionine</keyword>
<keyword id="KW-0808">Transferase</keyword>
<evidence type="ECO:0000255" key="1">
    <source>
        <dbReference type="HAMAP-Rule" id="MF_01865"/>
    </source>
</evidence>
<evidence type="ECO:0000255" key="2">
    <source>
        <dbReference type="PROSITE-ProRule" id="PRU01266"/>
    </source>
</evidence>
<proteinExistence type="inferred from homology"/>
<dbReference type="EC" id="2.8.4.4" evidence="1"/>
<dbReference type="EMBL" id="CP000252">
    <property type="protein sequence ID" value="ABC76149.1"/>
    <property type="molecule type" value="Genomic_DNA"/>
</dbReference>
<dbReference type="RefSeq" id="WP_011416183.1">
    <property type="nucleotide sequence ID" value="NC_007759.1"/>
</dbReference>
<dbReference type="SMR" id="Q2LQ68"/>
<dbReference type="FunCoup" id="Q2LQ68">
    <property type="interactions" value="348"/>
</dbReference>
<dbReference type="STRING" id="56780.SYN_01273"/>
<dbReference type="KEGG" id="sat:SYN_01273"/>
<dbReference type="eggNOG" id="COG0621">
    <property type="taxonomic scope" value="Bacteria"/>
</dbReference>
<dbReference type="HOGENOM" id="CLU_018697_0_1_7"/>
<dbReference type="InParanoid" id="Q2LQ68"/>
<dbReference type="OrthoDB" id="9805215at2"/>
<dbReference type="Proteomes" id="UP000001933">
    <property type="component" value="Chromosome"/>
</dbReference>
<dbReference type="GO" id="GO:0005829">
    <property type="term" value="C:cytosol"/>
    <property type="evidence" value="ECO:0007669"/>
    <property type="project" value="TreeGrafter"/>
</dbReference>
<dbReference type="GO" id="GO:0051539">
    <property type="term" value="F:4 iron, 4 sulfur cluster binding"/>
    <property type="evidence" value="ECO:0007669"/>
    <property type="project" value="UniProtKB-UniRule"/>
</dbReference>
<dbReference type="GO" id="GO:0035599">
    <property type="term" value="F:aspartic acid methylthiotransferase activity"/>
    <property type="evidence" value="ECO:0007669"/>
    <property type="project" value="TreeGrafter"/>
</dbReference>
<dbReference type="GO" id="GO:0046872">
    <property type="term" value="F:metal ion binding"/>
    <property type="evidence" value="ECO:0007669"/>
    <property type="project" value="UniProtKB-KW"/>
</dbReference>
<dbReference type="GO" id="GO:0103039">
    <property type="term" value="F:protein methylthiotransferase activity"/>
    <property type="evidence" value="ECO:0007669"/>
    <property type="project" value="UniProtKB-EC"/>
</dbReference>
<dbReference type="GO" id="GO:0006400">
    <property type="term" value="P:tRNA modification"/>
    <property type="evidence" value="ECO:0007669"/>
    <property type="project" value="InterPro"/>
</dbReference>
<dbReference type="CDD" id="cd01335">
    <property type="entry name" value="Radical_SAM"/>
    <property type="match status" value="1"/>
</dbReference>
<dbReference type="FunFam" id="3.80.30.20:FF:000001">
    <property type="entry name" value="tRNA-2-methylthio-N(6)-dimethylallyladenosine synthase 2"/>
    <property type="match status" value="1"/>
</dbReference>
<dbReference type="Gene3D" id="3.40.50.12160">
    <property type="entry name" value="Methylthiotransferase, N-terminal domain"/>
    <property type="match status" value="1"/>
</dbReference>
<dbReference type="Gene3D" id="2.40.50.140">
    <property type="entry name" value="Nucleic acid-binding proteins"/>
    <property type="match status" value="1"/>
</dbReference>
<dbReference type="Gene3D" id="3.80.30.20">
    <property type="entry name" value="tm_1862 like domain"/>
    <property type="match status" value="1"/>
</dbReference>
<dbReference type="HAMAP" id="MF_01865">
    <property type="entry name" value="MTTase_RimO"/>
    <property type="match status" value="1"/>
</dbReference>
<dbReference type="InterPro" id="IPR006638">
    <property type="entry name" value="Elp3/MiaA/NifB-like_rSAM"/>
</dbReference>
<dbReference type="InterPro" id="IPR005839">
    <property type="entry name" value="Methylthiotransferase"/>
</dbReference>
<dbReference type="InterPro" id="IPR020612">
    <property type="entry name" value="Methylthiotransferase_CS"/>
</dbReference>
<dbReference type="InterPro" id="IPR013848">
    <property type="entry name" value="Methylthiotransferase_N"/>
</dbReference>
<dbReference type="InterPro" id="IPR038135">
    <property type="entry name" value="Methylthiotransferase_N_sf"/>
</dbReference>
<dbReference type="InterPro" id="IPR012340">
    <property type="entry name" value="NA-bd_OB-fold"/>
</dbReference>
<dbReference type="InterPro" id="IPR005840">
    <property type="entry name" value="Ribosomal_uS12_MeSTrfase_RimO"/>
</dbReference>
<dbReference type="InterPro" id="IPR007197">
    <property type="entry name" value="rSAM"/>
</dbReference>
<dbReference type="InterPro" id="IPR023404">
    <property type="entry name" value="rSAM_horseshoe"/>
</dbReference>
<dbReference type="InterPro" id="IPR002792">
    <property type="entry name" value="TRAM_dom"/>
</dbReference>
<dbReference type="NCBIfam" id="TIGR01125">
    <property type="entry name" value="30S ribosomal protein S12 methylthiotransferase RimO"/>
    <property type="match status" value="1"/>
</dbReference>
<dbReference type="NCBIfam" id="TIGR00089">
    <property type="entry name" value="MiaB/RimO family radical SAM methylthiotransferase"/>
    <property type="match status" value="1"/>
</dbReference>
<dbReference type="PANTHER" id="PTHR43837">
    <property type="entry name" value="RIBOSOMAL PROTEIN S12 METHYLTHIOTRANSFERASE RIMO"/>
    <property type="match status" value="1"/>
</dbReference>
<dbReference type="PANTHER" id="PTHR43837:SF1">
    <property type="entry name" value="RIBOSOMAL PROTEIN US12 METHYLTHIOTRANSFERASE RIMO"/>
    <property type="match status" value="1"/>
</dbReference>
<dbReference type="Pfam" id="PF04055">
    <property type="entry name" value="Radical_SAM"/>
    <property type="match status" value="1"/>
</dbReference>
<dbReference type="Pfam" id="PF18693">
    <property type="entry name" value="TRAM_2"/>
    <property type="match status" value="1"/>
</dbReference>
<dbReference type="Pfam" id="PF00919">
    <property type="entry name" value="UPF0004"/>
    <property type="match status" value="1"/>
</dbReference>
<dbReference type="SFLD" id="SFLDG01082">
    <property type="entry name" value="B12-binding_domain_containing"/>
    <property type="match status" value="1"/>
</dbReference>
<dbReference type="SFLD" id="SFLDG01061">
    <property type="entry name" value="methylthiotransferase"/>
    <property type="match status" value="1"/>
</dbReference>
<dbReference type="SFLD" id="SFLDF00274">
    <property type="entry name" value="ribosomal_protein_S12_methylth"/>
    <property type="match status" value="1"/>
</dbReference>
<dbReference type="SMART" id="SM00729">
    <property type="entry name" value="Elp3"/>
    <property type="match status" value="1"/>
</dbReference>
<dbReference type="SUPFAM" id="SSF102114">
    <property type="entry name" value="Radical SAM enzymes"/>
    <property type="match status" value="1"/>
</dbReference>
<dbReference type="PROSITE" id="PS51449">
    <property type="entry name" value="MTTASE_N"/>
    <property type="match status" value="1"/>
</dbReference>
<dbReference type="PROSITE" id="PS01278">
    <property type="entry name" value="MTTASE_RADICAL"/>
    <property type="match status" value="1"/>
</dbReference>
<dbReference type="PROSITE" id="PS51918">
    <property type="entry name" value="RADICAL_SAM"/>
    <property type="match status" value="1"/>
</dbReference>
<dbReference type="PROSITE" id="PS50926">
    <property type="entry name" value="TRAM"/>
    <property type="match status" value="1"/>
</dbReference>
<sequence>MRETSVHIVSLGCPKNLIDSEVMAALLEQAGCRIVSGPEEADILLLNTCAFILPAREESIDEIFRLAEWKKAGKCRHLIVTGCLPQRYGAELAAELPEVDLFLGISEVPNIADHLRVLMEGKHSEKNRVIVTNPLFLMDAGHPRLLSTPPYSAYLKIAEGCSNRCSYCIIPRLRGKARSRPIEDILREAEDLVDRGVRELILVAQDTTAYGRDLEGKPTLALLLRELAGLNTLAWIRILYTYPTGLTDELLNVIANQDRICSYLDVPIQHIDDDILAAMKRRGDSHLIRNSLERARAVIPDLALRTSLITGFPGETPAKFHRLIAFVQETRFDHLGVFPYSPEEGTPAEKLPRQVSQRTKETRRNLLMEEQAVISHEINQTLVGSLQEVLIEGPSSSPDYPMIGRCRRQAPDIDGLTYVKGGKQPFLPGSLVQCRIVAADDYDLFAEVISSPD</sequence>
<protein>
    <recommendedName>
        <fullName evidence="1">Ribosomal protein uS12 methylthiotransferase RimO</fullName>
        <shortName evidence="1">uS12 MTTase</shortName>
        <shortName evidence="1">uS12 methylthiotransferase</shortName>
        <ecNumber evidence="1">2.8.4.4</ecNumber>
    </recommendedName>
    <alternativeName>
        <fullName evidence="1">Ribosomal protein uS12 (aspartate-C(3))-methylthiotransferase</fullName>
    </alternativeName>
    <alternativeName>
        <fullName evidence="1">Ribosome maturation factor RimO</fullName>
    </alternativeName>
</protein>
<feature type="chain" id="PRO_0000375042" description="Ribosomal protein uS12 methylthiotransferase RimO">
    <location>
        <begin position="1"/>
        <end position="453"/>
    </location>
</feature>
<feature type="domain" description="MTTase N-terminal" evidence="1">
    <location>
        <begin position="4"/>
        <end position="120"/>
    </location>
</feature>
<feature type="domain" description="Radical SAM core" evidence="2">
    <location>
        <begin position="147"/>
        <end position="377"/>
    </location>
</feature>
<feature type="domain" description="TRAM" evidence="1">
    <location>
        <begin position="380"/>
        <end position="450"/>
    </location>
</feature>
<feature type="binding site" evidence="1">
    <location>
        <position position="13"/>
    </location>
    <ligand>
        <name>[4Fe-4S] cluster</name>
        <dbReference type="ChEBI" id="CHEBI:49883"/>
        <label>1</label>
    </ligand>
</feature>
<feature type="binding site" evidence="1">
    <location>
        <position position="49"/>
    </location>
    <ligand>
        <name>[4Fe-4S] cluster</name>
        <dbReference type="ChEBI" id="CHEBI:49883"/>
        <label>1</label>
    </ligand>
</feature>
<feature type="binding site" evidence="1">
    <location>
        <position position="83"/>
    </location>
    <ligand>
        <name>[4Fe-4S] cluster</name>
        <dbReference type="ChEBI" id="CHEBI:49883"/>
        <label>1</label>
    </ligand>
</feature>
<feature type="binding site" evidence="1">
    <location>
        <position position="161"/>
    </location>
    <ligand>
        <name>[4Fe-4S] cluster</name>
        <dbReference type="ChEBI" id="CHEBI:49883"/>
        <label>2</label>
        <note>4Fe-4S-S-AdoMet</note>
    </ligand>
</feature>
<feature type="binding site" evidence="1">
    <location>
        <position position="165"/>
    </location>
    <ligand>
        <name>[4Fe-4S] cluster</name>
        <dbReference type="ChEBI" id="CHEBI:49883"/>
        <label>2</label>
        <note>4Fe-4S-S-AdoMet</note>
    </ligand>
</feature>
<feature type="binding site" evidence="1">
    <location>
        <position position="168"/>
    </location>
    <ligand>
        <name>[4Fe-4S] cluster</name>
        <dbReference type="ChEBI" id="CHEBI:49883"/>
        <label>2</label>
        <note>4Fe-4S-S-AdoMet</note>
    </ligand>
</feature>
<comment type="function">
    <text evidence="1">Catalyzes the methylthiolation of an aspartic acid residue of ribosomal protein uS12.</text>
</comment>
<comment type="catalytic activity">
    <reaction evidence="1">
        <text>L-aspartate(89)-[ribosomal protein uS12]-hydrogen + (sulfur carrier)-SH + AH2 + 2 S-adenosyl-L-methionine = 3-methylsulfanyl-L-aspartate(89)-[ribosomal protein uS12]-hydrogen + (sulfur carrier)-H + 5'-deoxyadenosine + L-methionine + A + S-adenosyl-L-homocysteine + 2 H(+)</text>
        <dbReference type="Rhea" id="RHEA:37087"/>
        <dbReference type="Rhea" id="RHEA-COMP:10460"/>
        <dbReference type="Rhea" id="RHEA-COMP:10461"/>
        <dbReference type="Rhea" id="RHEA-COMP:14737"/>
        <dbReference type="Rhea" id="RHEA-COMP:14739"/>
        <dbReference type="ChEBI" id="CHEBI:13193"/>
        <dbReference type="ChEBI" id="CHEBI:15378"/>
        <dbReference type="ChEBI" id="CHEBI:17319"/>
        <dbReference type="ChEBI" id="CHEBI:17499"/>
        <dbReference type="ChEBI" id="CHEBI:29917"/>
        <dbReference type="ChEBI" id="CHEBI:29961"/>
        <dbReference type="ChEBI" id="CHEBI:57844"/>
        <dbReference type="ChEBI" id="CHEBI:57856"/>
        <dbReference type="ChEBI" id="CHEBI:59789"/>
        <dbReference type="ChEBI" id="CHEBI:64428"/>
        <dbReference type="ChEBI" id="CHEBI:73599"/>
        <dbReference type="EC" id="2.8.4.4"/>
    </reaction>
</comment>
<comment type="cofactor">
    <cofactor evidence="1">
        <name>[4Fe-4S] cluster</name>
        <dbReference type="ChEBI" id="CHEBI:49883"/>
    </cofactor>
    <text evidence="1">Binds 2 [4Fe-4S] clusters. One cluster is coordinated with 3 cysteines and an exchangeable S-adenosyl-L-methionine.</text>
</comment>
<comment type="subcellular location">
    <subcellularLocation>
        <location evidence="1">Cytoplasm</location>
    </subcellularLocation>
</comment>
<comment type="similarity">
    <text evidence="1">Belongs to the methylthiotransferase family. RimO subfamily.</text>
</comment>